<evidence type="ECO:0000255" key="1">
    <source>
        <dbReference type="PROSITE-ProRule" id="PRU00902"/>
    </source>
</evidence>
<evidence type="ECO:0000256" key="2">
    <source>
        <dbReference type="SAM" id="MobiDB-lite"/>
    </source>
</evidence>
<evidence type="ECO:0000269" key="3">
    <source>
    </source>
</evidence>
<evidence type="ECO:0000269" key="4">
    <source>
    </source>
</evidence>
<evidence type="ECO:0000269" key="5">
    <source>
    </source>
</evidence>
<evidence type="ECO:0000303" key="6">
    <source ref="3"/>
</evidence>
<evidence type="ECO:0000305" key="7"/>
<accession>Q8INR6</accession>
<accession>A4V2H8</accession>
<accession>Q1RKY0</accession>
<accession>Q9VI22</accession>
<protein>
    <recommendedName>
        <fullName>Histone-lysine N-methyltransferase, H3 lysine-79 specific</fullName>
        <ecNumber evidence="3">2.1.1.360</ecNumber>
    </recommendedName>
    <alternativeName>
        <fullName>DOT1-like protein</fullName>
        <shortName>dDOT1L</shortName>
    </alternativeName>
    <alternativeName>
        <fullName>Histone H3-K79 methyltransferase</fullName>
        <shortName>H3-K79-HMTase</shortName>
    </alternativeName>
    <alternativeName>
        <fullName>Protein grappa</fullName>
    </alternativeName>
</protein>
<reference key="1">
    <citation type="journal article" date="2000" name="Science">
        <title>The genome sequence of Drosophila melanogaster.</title>
        <authorList>
            <person name="Adams M.D."/>
            <person name="Celniker S.E."/>
            <person name="Holt R.A."/>
            <person name="Evans C.A."/>
            <person name="Gocayne J.D."/>
            <person name="Amanatides P.G."/>
            <person name="Scherer S.E."/>
            <person name="Li P.W."/>
            <person name="Hoskins R.A."/>
            <person name="Galle R.F."/>
            <person name="George R.A."/>
            <person name="Lewis S.E."/>
            <person name="Richards S."/>
            <person name="Ashburner M."/>
            <person name="Henderson S.N."/>
            <person name="Sutton G.G."/>
            <person name="Wortman J.R."/>
            <person name="Yandell M.D."/>
            <person name="Zhang Q."/>
            <person name="Chen L.X."/>
            <person name="Brandon R.C."/>
            <person name="Rogers Y.-H.C."/>
            <person name="Blazej R.G."/>
            <person name="Champe M."/>
            <person name="Pfeiffer B.D."/>
            <person name="Wan K.H."/>
            <person name="Doyle C."/>
            <person name="Baxter E.G."/>
            <person name="Helt G."/>
            <person name="Nelson C.R."/>
            <person name="Miklos G.L.G."/>
            <person name="Abril J.F."/>
            <person name="Agbayani A."/>
            <person name="An H.-J."/>
            <person name="Andrews-Pfannkoch C."/>
            <person name="Baldwin D."/>
            <person name="Ballew R.M."/>
            <person name="Basu A."/>
            <person name="Baxendale J."/>
            <person name="Bayraktaroglu L."/>
            <person name="Beasley E.M."/>
            <person name="Beeson K.Y."/>
            <person name="Benos P.V."/>
            <person name="Berman B.P."/>
            <person name="Bhandari D."/>
            <person name="Bolshakov S."/>
            <person name="Borkova D."/>
            <person name="Botchan M.R."/>
            <person name="Bouck J."/>
            <person name="Brokstein P."/>
            <person name="Brottier P."/>
            <person name="Burtis K.C."/>
            <person name="Busam D.A."/>
            <person name="Butler H."/>
            <person name="Cadieu E."/>
            <person name="Center A."/>
            <person name="Chandra I."/>
            <person name="Cherry J.M."/>
            <person name="Cawley S."/>
            <person name="Dahlke C."/>
            <person name="Davenport L.B."/>
            <person name="Davies P."/>
            <person name="de Pablos B."/>
            <person name="Delcher A."/>
            <person name="Deng Z."/>
            <person name="Mays A.D."/>
            <person name="Dew I."/>
            <person name="Dietz S.M."/>
            <person name="Dodson K."/>
            <person name="Doup L.E."/>
            <person name="Downes M."/>
            <person name="Dugan-Rocha S."/>
            <person name="Dunkov B.C."/>
            <person name="Dunn P."/>
            <person name="Durbin K.J."/>
            <person name="Evangelista C.C."/>
            <person name="Ferraz C."/>
            <person name="Ferriera S."/>
            <person name="Fleischmann W."/>
            <person name="Fosler C."/>
            <person name="Gabrielian A.E."/>
            <person name="Garg N.S."/>
            <person name="Gelbart W.M."/>
            <person name="Glasser K."/>
            <person name="Glodek A."/>
            <person name="Gong F."/>
            <person name="Gorrell J.H."/>
            <person name="Gu Z."/>
            <person name="Guan P."/>
            <person name="Harris M."/>
            <person name="Harris N.L."/>
            <person name="Harvey D.A."/>
            <person name="Heiman T.J."/>
            <person name="Hernandez J.R."/>
            <person name="Houck J."/>
            <person name="Hostin D."/>
            <person name="Houston K.A."/>
            <person name="Howland T.J."/>
            <person name="Wei M.-H."/>
            <person name="Ibegwam C."/>
            <person name="Jalali M."/>
            <person name="Kalush F."/>
            <person name="Karpen G.H."/>
            <person name="Ke Z."/>
            <person name="Kennison J.A."/>
            <person name="Ketchum K.A."/>
            <person name="Kimmel B.E."/>
            <person name="Kodira C.D."/>
            <person name="Kraft C.L."/>
            <person name="Kravitz S."/>
            <person name="Kulp D."/>
            <person name="Lai Z."/>
            <person name="Lasko P."/>
            <person name="Lei Y."/>
            <person name="Levitsky A.A."/>
            <person name="Li J.H."/>
            <person name="Li Z."/>
            <person name="Liang Y."/>
            <person name="Lin X."/>
            <person name="Liu X."/>
            <person name="Mattei B."/>
            <person name="McIntosh T.C."/>
            <person name="McLeod M.P."/>
            <person name="McPherson D."/>
            <person name="Merkulov G."/>
            <person name="Milshina N.V."/>
            <person name="Mobarry C."/>
            <person name="Morris J."/>
            <person name="Moshrefi A."/>
            <person name="Mount S.M."/>
            <person name="Moy M."/>
            <person name="Murphy B."/>
            <person name="Murphy L."/>
            <person name="Muzny D.M."/>
            <person name="Nelson D.L."/>
            <person name="Nelson D.R."/>
            <person name="Nelson K.A."/>
            <person name="Nixon K."/>
            <person name="Nusskern D.R."/>
            <person name="Pacleb J.M."/>
            <person name="Palazzolo M."/>
            <person name="Pittman G.S."/>
            <person name="Pan S."/>
            <person name="Pollard J."/>
            <person name="Puri V."/>
            <person name="Reese M.G."/>
            <person name="Reinert K."/>
            <person name="Remington K."/>
            <person name="Saunders R.D.C."/>
            <person name="Scheeler F."/>
            <person name="Shen H."/>
            <person name="Shue B.C."/>
            <person name="Siden-Kiamos I."/>
            <person name="Simpson M."/>
            <person name="Skupski M.P."/>
            <person name="Smith T.J."/>
            <person name="Spier E."/>
            <person name="Spradling A.C."/>
            <person name="Stapleton M."/>
            <person name="Strong R."/>
            <person name="Sun E."/>
            <person name="Svirskas R."/>
            <person name="Tector C."/>
            <person name="Turner R."/>
            <person name="Venter E."/>
            <person name="Wang A.H."/>
            <person name="Wang X."/>
            <person name="Wang Z.-Y."/>
            <person name="Wassarman D.A."/>
            <person name="Weinstock G.M."/>
            <person name="Weissenbach J."/>
            <person name="Williams S.M."/>
            <person name="Woodage T."/>
            <person name="Worley K.C."/>
            <person name="Wu D."/>
            <person name="Yang S."/>
            <person name="Yao Q.A."/>
            <person name="Ye J."/>
            <person name="Yeh R.-F."/>
            <person name="Zaveri J.S."/>
            <person name="Zhan M."/>
            <person name="Zhang G."/>
            <person name="Zhao Q."/>
            <person name="Zheng L."/>
            <person name="Zheng X.H."/>
            <person name="Zhong F.N."/>
            <person name="Zhong W."/>
            <person name="Zhou X."/>
            <person name="Zhu S.C."/>
            <person name="Zhu X."/>
            <person name="Smith H.O."/>
            <person name="Gibbs R.A."/>
            <person name="Myers E.W."/>
            <person name="Rubin G.M."/>
            <person name="Venter J.C."/>
        </authorList>
    </citation>
    <scope>NUCLEOTIDE SEQUENCE [LARGE SCALE GENOMIC DNA]</scope>
    <source>
        <strain>Berkeley</strain>
    </source>
</reference>
<reference key="2">
    <citation type="journal article" date="2002" name="Genome Biol.">
        <title>Annotation of the Drosophila melanogaster euchromatic genome: a systematic review.</title>
        <authorList>
            <person name="Misra S."/>
            <person name="Crosby M.A."/>
            <person name="Mungall C.J."/>
            <person name="Matthews B.B."/>
            <person name="Campbell K.S."/>
            <person name="Hradecky P."/>
            <person name="Huang Y."/>
            <person name="Kaminker J.S."/>
            <person name="Millburn G.H."/>
            <person name="Prochnik S.E."/>
            <person name="Smith C.D."/>
            <person name="Tupy J.L."/>
            <person name="Whitfield E.J."/>
            <person name="Bayraktaroglu L."/>
            <person name="Berman B.P."/>
            <person name="Bettencourt B.R."/>
            <person name="Celniker S.E."/>
            <person name="de Grey A.D.N.J."/>
            <person name="Drysdale R.A."/>
            <person name="Harris N.L."/>
            <person name="Richter J."/>
            <person name="Russo S."/>
            <person name="Schroeder A.J."/>
            <person name="Shu S.Q."/>
            <person name="Stapleton M."/>
            <person name="Yamada C."/>
            <person name="Ashburner M."/>
            <person name="Gelbart W.M."/>
            <person name="Rubin G.M."/>
            <person name="Lewis S.E."/>
        </authorList>
    </citation>
    <scope>GENOME REANNOTATION</scope>
    <source>
        <strain>Berkeley</strain>
    </source>
</reference>
<reference key="3">
    <citation type="submission" date="2006-04" db="EMBL/GenBank/DDBJ databases">
        <authorList>
            <person name="Stapleton M."/>
            <person name="Carlson J.W."/>
            <person name="Chavez C."/>
            <person name="Frise E."/>
            <person name="George R.A."/>
            <person name="Pacleb J.M."/>
            <person name="Park S."/>
            <person name="Wan K.H."/>
            <person name="Yu C."/>
            <person name="Celniker S.E."/>
        </authorList>
    </citation>
    <scope>NUCLEOTIDE SEQUENCE [LARGE SCALE MRNA] (ISOFORM C)</scope>
    <source>
        <strain>Berkeley</strain>
    </source>
</reference>
<reference key="4">
    <citation type="journal article" date="2005" name="Genetics">
        <title>Characterization of the grappa gene, the Drosophila histone H3 lysine 79 methyltransferase.</title>
        <authorList>
            <person name="Shanower G.A."/>
            <person name="Mueller M."/>
            <person name="Blanton J.L."/>
            <person name="Honti V."/>
            <person name="Gyurkovics H."/>
            <person name="Schedl P."/>
        </authorList>
    </citation>
    <scope>FUNCTION</scope>
    <scope>SUBCELLULAR LOCATION</scope>
    <scope>CATALYTIC ACTIVITY</scope>
    <scope>DEVELOPMENTAL STAGE</scope>
</reference>
<reference key="5">
    <citation type="journal article" date="2008" name="J. Proteome Res.">
        <title>Phosphoproteome analysis of Drosophila melanogaster embryos.</title>
        <authorList>
            <person name="Zhai B."/>
            <person name="Villen J."/>
            <person name="Beausoleil S.A."/>
            <person name="Mintseris J."/>
            <person name="Gygi S.P."/>
        </authorList>
    </citation>
    <scope>PHOSPHORYLATION [LARGE SCALE ANALYSIS] AT SER-491; SER-492; SER-494; SER-1318; SER-1324 AND SER-1325</scope>
    <scope>IDENTIFICATION BY MASS SPECTROMETRY</scope>
    <source>
        <tissue>Embryo</tissue>
    </source>
</reference>
<reference key="6">
    <citation type="journal article" date="2023" name="Am. J. Hum. Genet.">
        <title>Rare de novo gain-of-function missense variants in DOT1L are associated with developmental delay and congenital anomalies.</title>
        <authorList>
            <consortium name="Undiagnosed Disease Network"/>
            <person name="Nil Z."/>
            <person name="Deshwar A.R."/>
            <person name="Huang Y."/>
            <person name="Barish S."/>
            <person name="Zhang X."/>
            <person name="Choufani S."/>
            <person name="Le Quesne Stabej P."/>
            <person name="Hayes I."/>
            <person name="Yap P."/>
            <person name="Haldeman-Englert C."/>
            <person name="Wilson C."/>
            <person name="Prescott T."/>
            <person name="Tveten K."/>
            <person name="Voello A."/>
            <person name="Haynes D."/>
            <person name="Wheeler P.G."/>
            <person name="Zon J."/>
            <person name="Cytrynbaum C."/>
            <person name="Jobling R."/>
            <person name="Blyth M."/>
            <person name="Banka S."/>
            <person name="Afenjar A."/>
            <person name="Mignot C."/>
            <person name="Robin-Renaldo F."/>
            <person name="Keren B."/>
            <person name="Kanca O."/>
            <person name="Mao X."/>
            <person name="Wegner D.J."/>
            <person name="Sisco K."/>
            <person name="Shinawi M."/>
            <person name="Wangler M.F."/>
            <person name="Weksberg R."/>
            <person name="Yamamoto S."/>
            <person name="Costain G."/>
            <person name="Bellen H.J."/>
        </authorList>
    </citation>
    <scope>FUNCTION</scope>
    <scope>TISSUE SPECIFICITY</scope>
    <scope>DEVELOPMENTAL STAGE</scope>
    <scope>DISRUPTION PHENOTYPE</scope>
</reference>
<proteinExistence type="evidence at protein level"/>
<comment type="function">
    <text evidence="3 5">Histone methyltransferase (PubMed:15371351). Methylates 'Lys-79' of histone H3 (PubMed:15371351, PubMed:37827158). Required for Polycomb Group (PcG) and trithorax Group (trxG) maintenance of expression (PubMed:15371351). Also involved in telomeric silencing but do not in centric heterochromatin (PubMed:15371351). Probably participates in pairing sensitivity (PubMed:15371351).</text>
</comment>
<comment type="catalytic activity">
    <reaction evidence="1 3">
        <text>L-lysyl(79)-[histone H3] + 3 S-adenosyl-L-methionine = N(6),N(6),N(6)-trimethyl-L-lysyl(79)-[histone H3] + 3 S-adenosyl-L-homocysteine + 3 H(+)</text>
        <dbReference type="Rhea" id="RHEA:60328"/>
        <dbReference type="Rhea" id="RHEA-COMP:15549"/>
        <dbReference type="Rhea" id="RHEA-COMP:15552"/>
        <dbReference type="ChEBI" id="CHEBI:15378"/>
        <dbReference type="ChEBI" id="CHEBI:29969"/>
        <dbReference type="ChEBI" id="CHEBI:57856"/>
        <dbReference type="ChEBI" id="CHEBI:59789"/>
        <dbReference type="ChEBI" id="CHEBI:61961"/>
        <dbReference type="EC" id="2.1.1.360"/>
    </reaction>
</comment>
<comment type="subcellular location">
    <subcellularLocation>
        <location evidence="3">Nucleus</location>
    </subcellularLocation>
</comment>
<comment type="alternative products">
    <event type="alternative splicing"/>
    <isoform>
        <id>Q8INR6-1</id>
        <name>A</name>
        <name>B</name>
        <sequence type="displayed"/>
    </isoform>
    <isoform>
        <id>Q8INR6-2</id>
        <name>C</name>
        <sequence type="described" ref="VSP_027492 VSP_012312 VSP_012313"/>
    </isoform>
</comment>
<comment type="tissue specificity">
    <text evidence="5">Broadly expressed in most tissues (PubMed:37827158). Expressed in a large subset of neurons and in a small subset of glial cells (PubMed:37827158).</text>
</comment>
<comment type="developmental stage">
    <text evidence="3 5">Expressed in embryos, larvae and adults. In the third-instar larvae, expressed in all imaginal disks including wing, eye, leg, and haltere disks (PubMed:37827158). Expressed in a large subset of neurons and in a small subset of glial cells (PubMed:37827158).</text>
</comment>
<comment type="disruption phenotype">
    <text evidence="5">Lethality is observed starting from first instar larval stage and animals do not survive beyond the third instar larval stage (PubMed:37827158). Severe decrease in total H3K79 methylation levels and developmental delay in third-instar larvae (PubMed:37827158). RNAi-mediated knockdown causes a severe decrease in H3K79 methylation levels and lethality (PubMed:37827158). RNAi-mediated knockdown in neurons causes lethality while knockdown in glial cells does not cause any observable phenotype (PubMed:37827158). RNAi-mediated knockdown in the developing eye causes a rough eye phenotype, which indicates a change in photoreceptor neuron composition in the eye (PubMed:37827158). RNAi-mediated knockdown in developing tissues leads to lethality and morphological phenotypes of the wing (PubMed:37827158).</text>
</comment>
<comment type="miscellaneous">
    <text>In contrast to other lysine histone methyltransferases, it does not contain a SET domain, suggesting the existence of another mechanism for methylation of lysine residues of histones.</text>
</comment>
<comment type="miscellaneous">
    <text>Was named 'grappa' because the eyes of mutant flies are of a color similar to that of the Italian spirit.</text>
</comment>
<comment type="similarity">
    <text evidence="1">Belongs to the class I-like SAM-binding methyltransferase superfamily. DOT1 family.</text>
</comment>
<comment type="sequence caution" evidence="7">
    <conflict type="frameshift">
        <sequence resource="EMBL-CDS" id="ABE73251"/>
    </conflict>
</comment>
<dbReference type="EC" id="2.1.1.360" evidence="3"/>
<dbReference type="EMBL" id="AE014297">
    <property type="protein sequence ID" value="AAF54122.2"/>
    <property type="molecule type" value="Genomic_DNA"/>
</dbReference>
<dbReference type="EMBL" id="AE014297">
    <property type="protein sequence ID" value="AAN13378.1"/>
    <property type="molecule type" value="Genomic_DNA"/>
</dbReference>
<dbReference type="EMBL" id="BT025080">
    <property type="protein sequence ID" value="ABE73251.1"/>
    <property type="status" value="ALT_FRAME"/>
    <property type="molecule type" value="mRNA"/>
</dbReference>
<dbReference type="RefSeq" id="NP_649655.1">
    <molecule id="Q8INR6-1"/>
    <property type="nucleotide sequence ID" value="NM_141398.4"/>
</dbReference>
<dbReference type="RefSeq" id="NP_731083.1">
    <molecule id="Q8INR6-1"/>
    <property type="nucleotide sequence ID" value="NM_169142.2"/>
</dbReference>
<dbReference type="RefSeq" id="NP_731084.1">
    <molecule id="Q8INR6-1"/>
    <property type="nucleotide sequence ID" value="NM_169143.2"/>
</dbReference>
<dbReference type="SMR" id="Q8INR6"/>
<dbReference type="BioGRID" id="65994">
    <property type="interactions" value="12"/>
</dbReference>
<dbReference type="FunCoup" id="Q8INR6">
    <property type="interactions" value="687"/>
</dbReference>
<dbReference type="IntAct" id="Q8INR6">
    <property type="interactions" value="3"/>
</dbReference>
<dbReference type="STRING" id="7227.FBpp0292801"/>
<dbReference type="GlyGen" id="Q8INR6">
    <property type="glycosylation" value="5 sites"/>
</dbReference>
<dbReference type="iPTMnet" id="Q8INR6"/>
<dbReference type="PaxDb" id="7227-FBpp0292801"/>
<dbReference type="EnsemblMetazoa" id="FBtr0303787">
    <molecule id="Q8INR6-1"/>
    <property type="protein sequence ID" value="FBpp0292799"/>
    <property type="gene ID" value="FBgn0264495"/>
</dbReference>
<dbReference type="EnsemblMetazoa" id="FBtr0303788">
    <molecule id="Q8INR6-1"/>
    <property type="protein sequence ID" value="FBpp0292800"/>
    <property type="gene ID" value="FBgn0264495"/>
</dbReference>
<dbReference type="EnsemblMetazoa" id="FBtr0303790">
    <molecule id="Q8INR6-1"/>
    <property type="protein sequence ID" value="FBpp0292802"/>
    <property type="gene ID" value="FBgn0264495"/>
</dbReference>
<dbReference type="GeneID" id="40793"/>
<dbReference type="KEGG" id="dme:Dmel_CG42803"/>
<dbReference type="UCSC" id="CG10272-RA">
    <molecule id="Q8INR6-1"/>
    <property type="organism name" value="d. melanogaster"/>
</dbReference>
<dbReference type="AGR" id="FB:FBgn0264495"/>
<dbReference type="CTD" id="40793"/>
<dbReference type="FlyBase" id="FBgn0264495">
    <property type="gene designation" value="gpp"/>
</dbReference>
<dbReference type="VEuPathDB" id="VectorBase:FBgn0264495"/>
<dbReference type="eggNOG" id="KOG3924">
    <property type="taxonomic scope" value="Eukaryota"/>
</dbReference>
<dbReference type="GeneTree" id="ENSGT00390000013515"/>
<dbReference type="HOGENOM" id="CLU_001460_1_0_1"/>
<dbReference type="InParanoid" id="Q8INR6"/>
<dbReference type="OrthoDB" id="443402at2759"/>
<dbReference type="BioGRID-ORCS" id="40793">
    <property type="hits" value="0 hits in 1 CRISPR screen"/>
</dbReference>
<dbReference type="ChiTaRS" id="gpp">
    <property type="organism name" value="fly"/>
</dbReference>
<dbReference type="GenomeRNAi" id="40793"/>
<dbReference type="PRO" id="PR:Q8INR6"/>
<dbReference type="Proteomes" id="UP000000803">
    <property type="component" value="Chromosome 3R"/>
</dbReference>
<dbReference type="Bgee" id="FBgn0264495">
    <property type="expression patterns" value="Expressed in spermatogonium in testis and 275 other cell types or tissues"/>
</dbReference>
<dbReference type="ExpressionAtlas" id="Q8INR6">
    <property type="expression patterns" value="baseline and differential"/>
</dbReference>
<dbReference type="GO" id="GO:0000781">
    <property type="term" value="C:chromosome, telomeric region"/>
    <property type="evidence" value="ECO:0007669"/>
    <property type="project" value="GOC"/>
</dbReference>
<dbReference type="GO" id="GO:0035097">
    <property type="term" value="C:histone methyltransferase complex"/>
    <property type="evidence" value="ECO:0000305"/>
    <property type="project" value="UniProtKB"/>
</dbReference>
<dbReference type="GO" id="GO:0005634">
    <property type="term" value="C:nucleus"/>
    <property type="evidence" value="ECO:0000315"/>
    <property type="project" value="FlyBase"/>
</dbReference>
<dbReference type="GO" id="GO:0120506">
    <property type="term" value="F:histone H3K79 dimethyltransferase activity"/>
    <property type="evidence" value="ECO:0000315"/>
    <property type="project" value="FlyBase"/>
</dbReference>
<dbReference type="GO" id="GO:0031151">
    <property type="term" value="F:histone H3K79 methyltransferase activity"/>
    <property type="evidence" value="ECO:0000315"/>
    <property type="project" value="UniProtKB"/>
</dbReference>
<dbReference type="GO" id="GO:0120505">
    <property type="term" value="F:histone H3K79 monomethyltransferase activity"/>
    <property type="evidence" value="ECO:0000315"/>
    <property type="project" value="FlyBase"/>
</dbReference>
<dbReference type="GO" id="GO:0140956">
    <property type="term" value="F:histone H3K79 trimethyltransferase activity"/>
    <property type="evidence" value="ECO:0007669"/>
    <property type="project" value="UniProtKB-EC"/>
</dbReference>
<dbReference type="GO" id="GO:0000077">
    <property type="term" value="P:DNA damage checkpoint signaling"/>
    <property type="evidence" value="ECO:0000318"/>
    <property type="project" value="GO_Central"/>
</dbReference>
<dbReference type="GO" id="GO:0006281">
    <property type="term" value="P:DNA repair"/>
    <property type="evidence" value="ECO:0000318"/>
    <property type="project" value="GO_Central"/>
</dbReference>
<dbReference type="GO" id="GO:0031507">
    <property type="term" value="P:heterochromatin formation"/>
    <property type="evidence" value="ECO:0000315"/>
    <property type="project" value="UniProtKB"/>
</dbReference>
<dbReference type="GO" id="GO:0032259">
    <property type="term" value="P:methylation"/>
    <property type="evidence" value="ECO:0007669"/>
    <property type="project" value="UniProtKB-KW"/>
</dbReference>
<dbReference type="GO" id="GO:0031509">
    <property type="term" value="P:subtelomeric heterochromatin formation"/>
    <property type="evidence" value="ECO:0000315"/>
    <property type="project" value="UniProtKB"/>
</dbReference>
<dbReference type="GO" id="GO:0045815">
    <property type="term" value="P:transcription initiation-coupled chromatin remodeling"/>
    <property type="evidence" value="ECO:0000315"/>
    <property type="project" value="UniProtKB"/>
</dbReference>
<dbReference type="CDD" id="cd20902">
    <property type="entry name" value="CC_DOT1L"/>
    <property type="match status" value="1"/>
</dbReference>
<dbReference type="FunFam" id="1.10.260.60:FF:000002">
    <property type="entry name" value="Histone-lysine N-methyltransferase, H3 lysine-79 specific"/>
    <property type="match status" value="1"/>
</dbReference>
<dbReference type="FunFam" id="3.40.50.150:FF:000033">
    <property type="entry name" value="Histone-lysine N-methyltransferase, H3 lysine-79 specific"/>
    <property type="match status" value="1"/>
</dbReference>
<dbReference type="Gene3D" id="1.10.260.60">
    <property type="match status" value="1"/>
</dbReference>
<dbReference type="Gene3D" id="3.40.50.150">
    <property type="entry name" value="Vaccinia Virus protein VP39"/>
    <property type="match status" value="1"/>
</dbReference>
<dbReference type="InterPro" id="IPR025789">
    <property type="entry name" value="DOT1_dom"/>
</dbReference>
<dbReference type="InterPro" id="IPR021169">
    <property type="entry name" value="DOT1L/grappa"/>
</dbReference>
<dbReference type="InterPro" id="IPR030445">
    <property type="entry name" value="H3-K79_meTrfase"/>
</dbReference>
<dbReference type="InterPro" id="IPR029063">
    <property type="entry name" value="SAM-dependent_MTases_sf"/>
</dbReference>
<dbReference type="PANTHER" id="PTHR21451">
    <property type="entry name" value="HISTONE H3 METHYLTRANSFERASE"/>
    <property type="match status" value="1"/>
</dbReference>
<dbReference type="PANTHER" id="PTHR21451:SF0">
    <property type="entry name" value="HISTONE-LYSINE N-METHYLTRANSFERASE, H3 LYSINE-79 SPECIFIC"/>
    <property type="match status" value="1"/>
</dbReference>
<dbReference type="Pfam" id="PF08123">
    <property type="entry name" value="DOT1"/>
    <property type="match status" value="1"/>
</dbReference>
<dbReference type="PIRSF" id="PIRSF037123">
    <property type="entry name" value="Histone_H3-K79_MeTrfase_met"/>
    <property type="match status" value="1"/>
</dbReference>
<dbReference type="SUPFAM" id="SSF53335">
    <property type="entry name" value="S-adenosyl-L-methionine-dependent methyltransferases"/>
    <property type="match status" value="1"/>
</dbReference>
<dbReference type="PROSITE" id="PS51569">
    <property type="entry name" value="DOT1"/>
    <property type="match status" value="1"/>
</dbReference>
<feature type="chain" id="PRO_0000186090" description="Histone-lysine N-methyltransferase, H3 lysine-79 specific">
    <location>
        <begin position="1"/>
        <end position="1848"/>
    </location>
</feature>
<feature type="domain" description="DOT1" evidence="1">
    <location>
        <begin position="19"/>
        <end position="336"/>
    </location>
</feature>
<feature type="region of interest" description="Disordered" evidence="2">
    <location>
        <begin position="338"/>
        <end position="537"/>
    </location>
</feature>
<feature type="region of interest" description="Disordered" evidence="2">
    <location>
        <begin position="558"/>
        <end position="593"/>
    </location>
</feature>
<feature type="region of interest" description="Disordered" evidence="2">
    <location>
        <begin position="886"/>
        <end position="908"/>
    </location>
</feature>
<feature type="region of interest" description="Disordered" evidence="2">
    <location>
        <begin position="960"/>
        <end position="996"/>
    </location>
</feature>
<feature type="region of interest" description="Disordered" evidence="2">
    <location>
        <begin position="1033"/>
        <end position="1075"/>
    </location>
</feature>
<feature type="region of interest" description="Disordered" evidence="2">
    <location>
        <begin position="1165"/>
        <end position="1190"/>
    </location>
</feature>
<feature type="region of interest" description="Disordered" evidence="2">
    <location>
        <begin position="1221"/>
        <end position="1333"/>
    </location>
</feature>
<feature type="region of interest" description="Disordered" evidence="2">
    <location>
        <begin position="1345"/>
        <end position="1374"/>
    </location>
</feature>
<feature type="region of interest" description="Disordered" evidence="2">
    <location>
        <begin position="1432"/>
        <end position="1463"/>
    </location>
</feature>
<feature type="region of interest" description="Disordered" evidence="2">
    <location>
        <begin position="1486"/>
        <end position="1508"/>
    </location>
</feature>
<feature type="region of interest" description="Disordered" evidence="2">
    <location>
        <begin position="1529"/>
        <end position="1559"/>
    </location>
</feature>
<feature type="region of interest" description="Disordered" evidence="2">
    <location>
        <begin position="1573"/>
        <end position="1604"/>
    </location>
</feature>
<feature type="region of interest" description="Disordered" evidence="2">
    <location>
        <begin position="1637"/>
        <end position="1713"/>
    </location>
</feature>
<feature type="region of interest" description="Disordered" evidence="2">
    <location>
        <begin position="1731"/>
        <end position="1757"/>
    </location>
</feature>
<feature type="compositionally biased region" description="Basic and acidic residues" evidence="2">
    <location>
        <begin position="339"/>
        <end position="360"/>
    </location>
</feature>
<feature type="compositionally biased region" description="Basic residues" evidence="2">
    <location>
        <begin position="364"/>
        <end position="373"/>
    </location>
</feature>
<feature type="compositionally biased region" description="Low complexity" evidence="2">
    <location>
        <begin position="391"/>
        <end position="405"/>
    </location>
</feature>
<feature type="compositionally biased region" description="Polar residues" evidence="2">
    <location>
        <begin position="419"/>
        <end position="428"/>
    </location>
</feature>
<feature type="compositionally biased region" description="Low complexity" evidence="2">
    <location>
        <begin position="429"/>
        <end position="439"/>
    </location>
</feature>
<feature type="compositionally biased region" description="Low complexity" evidence="2">
    <location>
        <begin position="453"/>
        <end position="474"/>
    </location>
</feature>
<feature type="compositionally biased region" description="Gly residues" evidence="2">
    <location>
        <begin position="507"/>
        <end position="518"/>
    </location>
</feature>
<feature type="compositionally biased region" description="Basic residues" evidence="2">
    <location>
        <begin position="526"/>
        <end position="535"/>
    </location>
</feature>
<feature type="compositionally biased region" description="Basic residues" evidence="2">
    <location>
        <begin position="582"/>
        <end position="593"/>
    </location>
</feature>
<feature type="compositionally biased region" description="Low complexity" evidence="2">
    <location>
        <begin position="1221"/>
        <end position="1235"/>
    </location>
</feature>
<feature type="compositionally biased region" description="Basic residues" evidence="2">
    <location>
        <begin position="1236"/>
        <end position="1263"/>
    </location>
</feature>
<feature type="compositionally biased region" description="Low complexity" evidence="2">
    <location>
        <begin position="1289"/>
        <end position="1300"/>
    </location>
</feature>
<feature type="compositionally biased region" description="Low complexity" evidence="2">
    <location>
        <begin position="1532"/>
        <end position="1545"/>
    </location>
</feature>
<feature type="compositionally biased region" description="Basic and acidic residues" evidence="2">
    <location>
        <begin position="1574"/>
        <end position="1583"/>
    </location>
</feature>
<feature type="compositionally biased region" description="Low complexity" evidence="2">
    <location>
        <begin position="1585"/>
        <end position="1598"/>
    </location>
</feature>
<feature type="compositionally biased region" description="Low complexity" evidence="2">
    <location>
        <begin position="1681"/>
        <end position="1696"/>
    </location>
</feature>
<feature type="compositionally biased region" description="Polar residues" evidence="2">
    <location>
        <begin position="1697"/>
        <end position="1706"/>
    </location>
</feature>
<feature type="binding site" evidence="1">
    <location>
        <begin position="142"/>
        <end position="145"/>
    </location>
    <ligand>
        <name>S-adenosyl-L-methionine</name>
        <dbReference type="ChEBI" id="CHEBI:59789"/>
    </ligand>
</feature>
<feature type="binding site" evidence="1">
    <location>
        <begin position="165"/>
        <end position="174"/>
    </location>
    <ligand>
        <name>S-adenosyl-L-methionine</name>
        <dbReference type="ChEBI" id="CHEBI:59789"/>
    </ligand>
</feature>
<feature type="binding site" evidence="1">
    <location>
        <position position="192"/>
    </location>
    <ligand>
        <name>S-adenosyl-L-methionine</name>
        <dbReference type="ChEBI" id="CHEBI:59789"/>
    </ligand>
</feature>
<feature type="binding site" evidence="1">
    <location>
        <begin position="228"/>
        <end position="229"/>
    </location>
    <ligand>
        <name>S-adenosyl-L-methionine</name>
        <dbReference type="ChEBI" id="CHEBI:59789"/>
    </ligand>
</feature>
<feature type="modified residue" description="Phosphoserine" evidence="4">
    <location>
        <position position="491"/>
    </location>
</feature>
<feature type="modified residue" description="Phosphoserine" evidence="4">
    <location>
        <position position="492"/>
    </location>
</feature>
<feature type="modified residue" description="Phosphoserine" evidence="4">
    <location>
        <position position="494"/>
    </location>
</feature>
<feature type="modified residue" description="Phosphoserine" evidence="4">
    <location>
        <position position="1318"/>
    </location>
</feature>
<feature type="modified residue" description="Phosphoserine" evidence="4">
    <location>
        <position position="1324"/>
    </location>
</feature>
<feature type="modified residue" description="Phosphoserine" evidence="4">
    <location>
        <position position="1325"/>
    </location>
</feature>
<feature type="splice variant" id="VSP_027492" description="In isoform C." evidence="6">
    <location>
        <begin position="430"/>
        <end position="1253"/>
    </location>
</feature>
<feature type="splice variant" id="VSP_012312" description="In isoform C." evidence="6">
    <original>LAASLQDHVRARK</original>
    <variation>KLPLVFVRRAWTF</variation>
    <location>
        <begin position="1561"/>
        <end position="1573"/>
    </location>
</feature>
<feature type="splice variant" id="VSP_012313" description="In isoform C." evidence="6">
    <location>
        <begin position="1574"/>
        <end position="1848"/>
    </location>
</feature>
<name>DOT1L_DROME</name>
<sequence>MATPQVKDLVLRSPAGSSDVISFAWPLQIGHGQDKHDNGIDIIDTIKFVCDELPSMSSAFEETNLHQIDTACYKTMTGLVDRFNKAVDSIVALEKGTSLPAERLNKFAHPSLLRHILQLVYNAAVLDPDKLNQYEPFSPEVYGETSYELVQQMLKHVTVSKEDTFIDLGSGVGQVVLQMAGSFPLKTCIGIEKADTPARYAERMDVIFRQYMGWFGKRFCEYKLIKGDFLVDEHRENITSSTLVFVNNFAFGPTVDHQLKERFADLRDGARVVSSKSFCPLNFRITDRNLSDIGTIMHVSEIPPLKGSVSWTCKPVSYYLHVIDRTILERYFQRLKTKGGNDHESVGTVRTTRDRAKREANVGQHHHNNHHSNNHANSNNHQRDREQSNGATATAAHQQRHQSQSPANVSGAGIVLAASGQQAASKTRQQLQHQHNQQQRSLDMESSTESDGDATNGNGGNTTTATNTTSASNGPMTRKVWSDWCSSKGKSSQSDDEENNNSNSNGGSNGGSIGGGSVGRQARATTQKKRKKLTRKAAIASKSAAAAQREAEAAAAAAVSVPSKESSSKEDPPRAASAGPGRKGRMKKGARGRKSLKIVGLEALHKQTVLSTSLDTMTKKLPAAPGTVDQQLTALLTENMSHAELDIPTAPQDTPYALQILLDVFRSQYTSMIEHMKSSAYVPQVQKQIAQEQERMARLKNRASQLDKQIKVLIDDSVALLKVRMNELGIHVNSPNDLIAQAKEIVGRHKDLQHTASRMRNEVTFYEGEQKLLLNKQLKNLPEYQKLCGTVNGKVKLEVPPELSETTAQELVLKEIANTLSQRKKLYAQVSTIEQETSVLQKTAEERSTAATLLAQGTNMIVSTGSSSSSSTTVCASAVTAQSNKLNSVKNSRRNREHRARSQEWPEVPEVGKIQESNPEVLAQKIVETCRQIEAGKFQGAGAPSSQVNGKNKAIIEVPPPPATAPVSIKSSPGHHYKDTTLMPAPKQQQQQQMTLSQLPKCELPGLSTSRKQESPKVANFEDRLKSIITTALNEDQEQRSKAVESSPSPSPLHSPAPKRSKQHPAGAINPAQSLPNNLHNIITVSTQGLMHLNANTTISPITPPLPGPGAGATASTAPPPPANLPYGAYGGAVAKTTISGKYQAAKEPKYSPVRQAPLPPPPSHMASLYPAGQQTTPADLGYQRRRSSVSATSYEHYMVQQQQQLQQQQLMLAAAAHAAQRQQMRVEEQQQQQQHQHHHHHHHHHPQHRLPQHVQHQHPHQHHPNEFKAPPADSHLQRSSSREQLIVEPPQTQPLELLPRASSANSDYSGYRIRPPSRPSSNSSQPDYTQVSPAKMALRRHLSQEKLSQHVTPQATPPLPGHGGAPTSGKTIGDLVNGEIERTLEISHQSIINAAVNMSTSGASFMERAFLNERSNDRLLINLNAQRPERVHVRPLSEESQDPQPTSYAQERGPGLGAGGAAAGGNSNLATLAHVAYAQKAQGGARANAGTAPPATHSSSARSGRDYQPVALPRAELKGSIEAYFHEEQQQKQSKGAGSAGSSSLRGPRLNGANPPLEGLAASLQDHVRARKYKEETEERQRRAAAAASSSAGPPAGMELPTHYAHQAPPAHSYHHHGASINGTPHKVELGIKRSSPLAPHQQPPRPSKLAHYEPPTTQQQHAHAHLYANGQVLPPPPAHDATTPSPTPSSSSSSCGRRSNSNNGKLLVDPPLLMSPEINSLLGDERPLQLSHHQQQQQQMLHHHQSQQQQHLQLTQQQLRVAHLGHGLSHGHSTMPTLGGQRNGNGNAADDVNDLATQRTITNYDPRRRLRTTLSGPTKLSAAHSNQNLNGYVMADSSSSCPTIPQ</sequence>
<gene>
    <name type="primary">gpp</name>
    <name type="ORF">CG10272</name>
</gene>
<keyword id="KW-0025">Alternative splicing</keyword>
<keyword id="KW-0156">Chromatin regulator</keyword>
<keyword id="KW-0489">Methyltransferase</keyword>
<keyword id="KW-0539">Nucleus</keyword>
<keyword id="KW-0597">Phosphoprotein</keyword>
<keyword id="KW-1185">Reference proteome</keyword>
<keyword id="KW-0949">S-adenosyl-L-methionine</keyword>
<keyword id="KW-0808">Transferase</keyword>
<organism>
    <name type="scientific">Drosophila melanogaster</name>
    <name type="common">Fruit fly</name>
    <dbReference type="NCBI Taxonomy" id="7227"/>
    <lineage>
        <taxon>Eukaryota</taxon>
        <taxon>Metazoa</taxon>
        <taxon>Ecdysozoa</taxon>
        <taxon>Arthropoda</taxon>
        <taxon>Hexapoda</taxon>
        <taxon>Insecta</taxon>
        <taxon>Pterygota</taxon>
        <taxon>Neoptera</taxon>
        <taxon>Endopterygota</taxon>
        <taxon>Diptera</taxon>
        <taxon>Brachycera</taxon>
        <taxon>Muscomorpha</taxon>
        <taxon>Ephydroidea</taxon>
        <taxon>Drosophilidae</taxon>
        <taxon>Drosophila</taxon>
        <taxon>Sophophora</taxon>
    </lineage>
</organism>